<evidence type="ECO:0000255" key="1"/>
<evidence type="ECO:0000305" key="2"/>
<feature type="chain" id="PRO_0000063975" description="Aquaporin AQPcic">
    <location>
        <begin position="1"/>
        <end position="255"/>
    </location>
</feature>
<feature type="topological domain" description="Cytoplasmic" evidence="1">
    <location>
        <begin position="1"/>
        <end position="29"/>
    </location>
</feature>
<feature type="transmembrane region" description="Helical; Name=1" evidence="1">
    <location>
        <begin position="30"/>
        <end position="50"/>
    </location>
</feature>
<feature type="topological domain" description="Extracellular" evidence="1">
    <location>
        <begin position="51"/>
        <end position="60"/>
    </location>
</feature>
<feature type="transmembrane region" description="Helical; Name=2" evidence="1">
    <location>
        <begin position="61"/>
        <end position="81"/>
    </location>
</feature>
<feature type="topological domain" description="Cytoplasmic" evidence="1">
    <location>
        <begin position="82"/>
        <end position="103"/>
    </location>
</feature>
<feature type="transmembrane region" description="Helical; Name=3" evidence="1">
    <location>
        <begin position="104"/>
        <end position="124"/>
    </location>
</feature>
<feature type="topological domain" description="Extracellular" evidence="1">
    <location>
        <begin position="125"/>
        <end position="141"/>
    </location>
</feature>
<feature type="transmembrane region" description="Helical; Name=4" evidence="1">
    <location>
        <begin position="142"/>
        <end position="162"/>
    </location>
</feature>
<feature type="topological domain" description="Cytoplasmic" evidence="1">
    <location>
        <begin position="163"/>
        <end position="172"/>
    </location>
</feature>
<feature type="transmembrane region" description="Helical; Name=5" evidence="1">
    <location>
        <begin position="173"/>
        <end position="193"/>
    </location>
</feature>
<feature type="topological domain" description="Extracellular" evidence="1">
    <location>
        <begin position="194"/>
        <end position="215"/>
    </location>
</feature>
<feature type="transmembrane region" description="Helical; Name=6" evidence="1">
    <location>
        <begin position="216"/>
        <end position="236"/>
    </location>
</feature>
<feature type="topological domain" description="Cytoplasmic" evidence="1">
    <location>
        <begin position="237"/>
        <end position="255"/>
    </location>
</feature>
<feature type="short sequence motif" description="NPA 1">
    <location>
        <begin position="85"/>
        <end position="87"/>
    </location>
</feature>
<feature type="short sequence motif" description="NPA 2">
    <location>
        <begin position="201"/>
        <end position="203"/>
    </location>
</feature>
<feature type="sequence conflict" description="In Ref. 2; CAA54921." evidence="2" ref="2">
    <original>ILKVITPAEFRGTLCMTSLAPGVTPPM</original>
    <variation>PQGNNPCRVQGHSLYDESRPRCDPAH</variation>
    <location>
        <begin position="120"/>
        <end position="146"/>
    </location>
</feature>
<feature type="sequence conflict" description="In Ref. 2; CAA54921." evidence="2" ref="2">
    <original>VCDDRRKNLG</original>
    <variation>LRRPPQEPA</variation>
    <location>
        <begin position="165"/>
        <end position="174"/>
    </location>
</feature>
<feature type="sequence conflict" description="In Ref. 2; CAA54921." evidence="2" ref="2">
    <original>A</original>
    <variation>R</variation>
    <location>
        <position position="180"/>
    </location>
</feature>
<accession>Q23808</accession>
<accession>Q23816</accession>
<comment type="function">
    <text>Forms a water-specific channel. May be involved in the transfer of excess sap dietary water from the initial midgut to the terminal midgut and the proximal part of the malpighian tubules.</text>
</comment>
<comment type="subunit">
    <text>Homotetramer.</text>
</comment>
<comment type="subcellular location">
    <subcellularLocation>
        <location>Membrane</location>
        <topology>Multi-pass membrane protein</topology>
    </subcellularLocation>
</comment>
<comment type="tissue specificity">
    <text>Filter chamber epithelium in the digestive tract. Absent from midgut.</text>
</comment>
<comment type="domain">
    <text>Aquaporins contain two tandem repeats each containing three membrane-spanning domains and a pore-forming loop with the signature motif Asn-Pro-Ala (NPA).</text>
</comment>
<comment type="similarity">
    <text evidence="2">Belongs to the MIP/aquaporin (TC 1.A.8) family.</text>
</comment>
<comment type="online information" name="Protein Spotlight">
    <link uri="https://www.proteinspotlight.org/back_issues/036"/>
    <text>Liquid states - Issue 36 of July 2003</text>
</comment>
<sequence>MAADKSVDNTKKIIGIDDITDTKTIWRCLAAELIGTLLLVLIGTGSCTGVQISEGDVVVRIALTFGFIIATMVQCIGHVSGCHINPAVTCGLLVTGHISILKAIFYIIVQCVGAIAGSAILKVITPAEFRGTLCMTSLAPGVTPPMGFLVEACITFVLILLVQSVCDDRRKNLGNAAPVAVGLAITCCHLAAIKYTGSSMNPARSFGPAVNGDDNWANHWVYWAGPIVGGVVAGITYRALFRARKPEEEASSYDF</sequence>
<gene>
    <name type="primary">AQP</name>
    <name type="synonym">CIC</name>
</gene>
<name>AQP_CICVR</name>
<dbReference type="EMBL" id="X97159">
    <property type="protein sequence ID" value="CAA65799.1"/>
    <property type="molecule type" value="mRNA"/>
</dbReference>
<dbReference type="EMBL" id="X77957">
    <property type="protein sequence ID" value="CAA54921.1"/>
    <property type="molecule type" value="mRNA"/>
</dbReference>
<dbReference type="SMR" id="Q23808"/>
<dbReference type="GO" id="GO:0005886">
    <property type="term" value="C:plasma membrane"/>
    <property type="evidence" value="ECO:0007669"/>
    <property type="project" value="TreeGrafter"/>
</dbReference>
<dbReference type="GO" id="GO:0015267">
    <property type="term" value="F:channel activity"/>
    <property type="evidence" value="ECO:0007669"/>
    <property type="project" value="InterPro"/>
</dbReference>
<dbReference type="CDD" id="cd00333">
    <property type="entry name" value="MIP"/>
    <property type="match status" value="1"/>
</dbReference>
<dbReference type="FunFam" id="1.20.1080.10:FF:000009">
    <property type="entry name" value="aquaporin-4 isoform X1"/>
    <property type="match status" value="1"/>
</dbReference>
<dbReference type="Gene3D" id="1.20.1080.10">
    <property type="entry name" value="Glycerol uptake facilitator protein"/>
    <property type="match status" value="1"/>
</dbReference>
<dbReference type="InterPro" id="IPR023271">
    <property type="entry name" value="Aquaporin-like"/>
</dbReference>
<dbReference type="InterPro" id="IPR034294">
    <property type="entry name" value="Aquaporin_transptr"/>
</dbReference>
<dbReference type="InterPro" id="IPR000425">
    <property type="entry name" value="MIP"/>
</dbReference>
<dbReference type="NCBIfam" id="TIGR00861">
    <property type="entry name" value="MIP"/>
    <property type="match status" value="1"/>
</dbReference>
<dbReference type="PANTHER" id="PTHR19139:SF291">
    <property type="entry name" value="AQUAPORIN"/>
    <property type="match status" value="1"/>
</dbReference>
<dbReference type="PANTHER" id="PTHR19139">
    <property type="entry name" value="AQUAPORIN TRANSPORTER"/>
    <property type="match status" value="1"/>
</dbReference>
<dbReference type="Pfam" id="PF00230">
    <property type="entry name" value="MIP"/>
    <property type="match status" value="1"/>
</dbReference>
<dbReference type="PRINTS" id="PR00783">
    <property type="entry name" value="MINTRINSICP"/>
</dbReference>
<dbReference type="SUPFAM" id="SSF81338">
    <property type="entry name" value="Aquaporin-like"/>
    <property type="match status" value="1"/>
</dbReference>
<organism>
    <name type="scientific">Cicadella viridis</name>
    <name type="common">Green leafhopper</name>
    <dbReference type="NCBI Taxonomy" id="36150"/>
    <lineage>
        <taxon>Eukaryota</taxon>
        <taxon>Metazoa</taxon>
        <taxon>Ecdysozoa</taxon>
        <taxon>Arthropoda</taxon>
        <taxon>Hexapoda</taxon>
        <taxon>Insecta</taxon>
        <taxon>Pterygota</taxon>
        <taxon>Neoptera</taxon>
        <taxon>Paraneoptera</taxon>
        <taxon>Hemiptera</taxon>
        <taxon>Auchenorrhyncha</taxon>
        <taxon>Membracoidea</taxon>
        <taxon>Cicadellidae</taxon>
        <taxon>Cicadellinae</taxon>
        <taxon>Cicadellini</taxon>
        <taxon>Cicadella</taxon>
    </lineage>
</organism>
<protein>
    <recommendedName>
        <fullName>Aquaporin AQPcic</fullName>
    </recommendedName>
</protein>
<keyword id="KW-0903">Direct protein sequencing</keyword>
<keyword id="KW-0472">Membrane</keyword>
<keyword id="KW-0677">Repeat</keyword>
<keyword id="KW-0812">Transmembrane</keyword>
<keyword id="KW-1133">Transmembrane helix</keyword>
<keyword id="KW-0813">Transport</keyword>
<reference key="1">
    <citation type="journal article" date="1996" name="Eur. J. Biochem.">
        <title>Molecular cloning and characterization of an insect aquaporin. Functional comparison with aquaporin 1.</title>
        <authorList>
            <person name="Le Caherec F."/>
            <person name="Deschamps S."/>
            <person name="Delamarche C."/>
            <person name="Pellerin I."/>
            <person name="Bonnec G."/>
            <person name="Guillam M.-T."/>
            <person name="Thomas D."/>
            <person name="Gouranton J."/>
            <person name="Hubert J.-F."/>
        </authorList>
    </citation>
    <scope>NUCLEOTIDE SEQUENCE [MRNA]</scope>
    <scope>PROTEIN SEQUENCE OF 245-255</scope>
    <source>
        <tissue>Filter chamber</tissue>
    </source>
</reference>
<reference key="2">
    <citation type="journal article" date="1995" name="J. Biol. Chem.">
        <title>Structural analysis of a MIP family protein from the digestive tract of Cicadella viridis.</title>
        <authorList>
            <person name="Beuron F."/>
            <person name="Le Caherec F."/>
            <person name="Guillam M.-T."/>
            <person name="Cavalier A."/>
            <person name="Garret A."/>
            <person name="Tassan J.-P."/>
            <person name="Delamarche C."/>
            <person name="Schultz P."/>
            <person name="Mallouh V."/>
            <person name="Rolland J.-P."/>
            <person name="Hubert J.-F."/>
            <person name="Gouranton J."/>
            <person name="Thomas D."/>
        </authorList>
    </citation>
    <scope>NUCLEOTIDE SEQUENCE [MRNA] OF 85-205</scope>
    <source>
        <tissue>Filter chamber</tissue>
    </source>
</reference>
<proteinExistence type="evidence at protein level"/>